<sequence length="607" mass="67815">MRGAARLGRPGRSCLPGARGLRAPPPPPLLLLLALLPLLPAPGAAAAPAPRPPELQSASAGPSVSLYLSEDEVRRLIGLDAELYYVRNDLISHYALSFSLLVPSETNFLHFTWHAKSKVEYKLGFQVDNVLAMDMPQVNISVQGEVPRTLSVFRVELSCTGKVDSEVMILMQLNLTVNSSKNFTVLNFKRRKMCYKKLEEVKTSALDKNTSRTIYDPVHAAPTTSTRVFYISVGVCCAVIFLVAIILAVLHLHSMKRIELDDSISASSSSQGLSQPSTQTTQYLRADTPNNATPITSYPTLRIEKNDLRSVTLLEAKGKVKDIAISRERITLKDVLQEGTFGRIFHGILIDEKDPNKEKQAFVKTVKDQASEIQVTMMLTESCKLRGLHHRNLLPITHVCIEEGEKPMVILPYMNWGNLKLFLRQCKLVEANNPQAISQQDLVHMAIQIACGMSYLARREVIHKDLAARNCVIDDTLQVKITDNALSRDLFPMDYHCLGDNENRPVRWMALESLVNNEFSSASDVWAFGVTLWELMTLGQTPYVDIDPFEMAAYLKDGYRIAQPINCPDELFAVMACCWALDPEERPKFQQLVQCLTEFHAALGAYV</sequence>
<gene>
    <name evidence="17" type="primary">RYK</name>
    <name type="synonym">JTK5A</name>
</gene>
<comment type="function">
    <text evidence="8">May be a coreceptor along with FZD8 of Wnt proteins, such as WNT1, WNT3, WNT3A and WNT5A. Involved in neuron differentiation, axon guidance, corpus callosum establishment and neurite outgrowth. In response to WNT3 stimulation, receptor C-terminal cleavage occurs in its transmembrane region and allows the C-terminal intracellular product to translocate from the cytoplasm to the nucleus where it plays a crucial role in neuronal development.</text>
</comment>
<comment type="catalytic activity">
    <reaction evidence="5">
        <text>L-tyrosyl-[protein] + ATP = O-phospho-L-tyrosyl-[protein] + ADP + H(+)</text>
        <dbReference type="Rhea" id="RHEA:10596"/>
        <dbReference type="Rhea" id="RHEA-COMP:10136"/>
        <dbReference type="Rhea" id="RHEA-COMP:20101"/>
        <dbReference type="ChEBI" id="CHEBI:15378"/>
        <dbReference type="ChEBI" id="CHEBI:30616"/>
        <dbReference type="ChEBI" id="CHEBI:46858"/>
        <dbReference type="ChEBI" id="CHEBI:61978"/>
        <dbReference type="ChEBI" id="CHEBI:456216"/>
        <dbReference type="EC" id="2.7.10.1"/>
    </reaction>
</comment>
<comment type="subunit">
    <text evidence="8">Interacts with DVL1 (via PDZ domain).</text>
</comment>
<comment type="subcellular location">
    <subcellularLocation>
        <location evidence="1">Membrane</location>
        <topology evidence="1">Single-pass type I membrane protein</topology>
    </subcellularLocation>
    <subcellularLocation>
        <location evidence="1">Nucleus</location>
    </subcellularLocation>
    <subcellularLocation>
        <location evidence="1">Cytoplasm</location>
    </subcellularLocation>
    <text evidence="1">In cells that have undergone neuronal differentiation, the C-terminal cleaved part is translocated from the cytoplasm to the nucleus.</text>
</comment>
<comment type="alternative products">
    <event type="alternative splicing"/>
    <isoform>
        <id>P34925-1</id>
        <name>1</name>
        <sequence type="displayed"/>
    </isoform>
    <isoform>
        <id>P34925-2</id>
        <name>2</name>
        <sequence type="described" ref="VSP_005009"/>
    </isoform>
</comment>
<comment type="tissue specificity">
    <text>Observed in all the tissues examined.</text>
</comment>
<comment type="domain">
    <text evidence="1">The extracellular WIF domain is responsible for Wnt binding.</text>
</comment>
<comment type="PTM">
    <text evidence="9">Proteolytically cleaved, in part by presenilin, in response to WNT3 stimulation. Cleavage occurs during neuronal differentiation.</text>
</comment>
<comment type="similarity">
    <text evidence="3">Belongs to the protein kinase superfamily. Tyr protein kinase family.</text>
</comment>
<comment type="caution">
    <text evidence="16">According to some authors, has impaired kinase activity.</text>
</comment>
<comment type="sequence caution" evidence="15">
    <conflict type="frameshift">
        <sequence resource="EMBL-CDS" id="AAB26341"/>
    </conflict>
</comment>
<comment type="sequence caution" evidence="15">
    <conflict type="erroneous initiation">
        <sequence resource="EMBL-CDS" id="CAA65406"/>
    </conflict>
    <text>Extended N-terminus.</text>
</comment>
<accession>P34925</accession>
<accession>A0A087WUK1</accession>
<accession>A0A096LNL3</accession>
<accession>Q04696</accession>
<organism>
    <name type="scientific">Homo sapiens</name>
    <name type="common">Human</name>
    <dbReference type="NCBI Taxonomy" id="9606"/>
    <lineage>
        <taxon>Eukaryota</taxon>
        <taxon>Metazoa</taxon>
        <taxon>Chordata</taxon>
        <taxon>Craniata</taxon>
        <taxon>Vertebrata</taxon>
        <taxon>Euteleostomi</taxon>
        <taxon>Mammalia</taxon>
        <taxon>Eutheria</taxon>
        <taxon>Euarchontoglires</taxon>
        <taxon>Primates</taxon>
        <taxon>Haplorrhini</taxon>
        <taxon>Catarrhini</taxon>
        <taxon>Hominidae</taxon>
        <taxon>Homo</taxon>
    </lineage>
</organism>
<keyword id="KW-0002">3D-structure</keyword>
<keyword id="KW-0025">Alternative splicing</keyword>
<keyword id="KW-0067">ATP-binding</keyword>
<keyword id="KW-0963">Cytoplasm</keyword>
<keyword id="KW-1015">Disulfide bond</keyword>
<keyword id="KW-0325">Glycoprotein</keyword>
<keyword id="KW-0418">Kinase</keyword>
<keyword id="KW-0472">Membrane</keyword>
<keyword id="KW-0547">Nucleotide-binding</keyword>
<keyword id="KW-0539">Nucleus</keyword>
<keyword id="KW-0597">Phosphoprotein</keyword>
<keyword id="KW-1267">Proteomics identification</keyword>
<keyword id="KW-0675">Receptor</keyword>
<keyword id="KW-1185">Reference proteome</keyword>
<keyword id="KW-0732">Signal</keyword>
<keyword id="KW-0808">Transferase</keyword>
<keyword id="KW-0812">Transmembrane</keyword>
<keyword id="KW-1133">Transmembrane helix</keyword>
<keyword id="KW-0829">Tyrosine-protein kinase</keyword>
<keyword id="KW-0879">Wnt signaling pathway</keyword>
<evidence type="ECO:0000250" key="1"/>
<evidence type="ECO:0000255" key="2"/>
<evidence type="ECO:0000255" key="3">
    <source>
        <dbReference type="PROSITE-ProRule" id="PRU00159"/>
    </source>
</evidence>
<evidence type="ECO:0000255" key="4">
    <source>
        <dbReference type="PROSITE-ProRule" id="PRU00222"/>
    </source>
</evidence>
<evidence type="ECO:0000255" key="5">
    <source>
        <dbReference type="PROSITE-ProRule" id="PRU10028"/>
    </source>
</evidence>
<evidence type="ECO:0000256" key="6">
    <source>
        <dbReference type="SAM" id="MobiDB-lite"/>
    </source>
</evidence>
<evidence type="ECO:0000269" key="7">
    <source>
    </source>
</evidence>
<evidence type="ECO:0000269" key="8">
    <source>
    </source>
</evidence>
<evidence type="ECO:0000269" key="9">
    <source>
    </source>
</evidence>
<evidence type="ECO:0000269" key="10">
    <source>
    </source>
</evidence>
<evidence type="ECO:0000269" key="11">
    <source>
    </source>
</evidence>
<evidence type="ECO:0000269" key="12">
    <source>
    </source>
</evidence>
<evidence type="ECO:0000269" key="13">
    <source>
    </source>
</evidence>
<evidence type="ECO:0000303" key="14">
    <source>
    </source>
</evidence>
<evidence type="ECO:0000305" key="15"/>
<evidence type="ECO:0000305" key="16">
    <source>
    </source>
</evidence>
<evidence type="ECO:0000312" key="17">
    <source>
        <dbReference type="HGNC" id="HGNC:10481"/>
    </source>
</evidence>
<evidence type="ECO:0007829" key="18">
    <source>
        <dbReference type="PDB" id="6TUA"/>
    </source>
</evidence>
<proteinExistence type="evidence at protein level"/>
<protein>
    <recommendedName>
        <fullName evidence="15">Tyrosine-protein kinase RYK</fullName>
        <ecNumber evidence="3">2.7.10.1</ecNumber>
    </recommendedName>
</protein>
<reference key="1">
    <citation type="journal article" date="1993" name="Oncogene">
        <title>Molecular cloning and chromosomal localisation of the human homologue of a receptor related to tyrosine kinases (RYK).</title>
        <authorList>
            <person name="Stacker S.A."/>
            <person name="Hovens C.M."/>
            <person name="Vitali A."/>
            <person name="Pritchard M.A."/>
            <person name="Baker E."/>
            <person name="Sutherland G.R."/>
            <person name="Wilks A.F."/>
        </authorList>
    </citation>
    <scope>NUCLEOTIDE SEQUENCE [MRNA] (ISOFORM 1)</scope>
    <scope>VARIANT ASN-99</scope>
</reference>
<reference key="2">
    <citation type="journal article" date="1993" name="Oncogene">
        <title>The human ryk cDNA sequence predicts a protein containing two putative transmembrane segments and a tyrosine kinase catalytic domain.</title>
        <authorList>
            <person name="Tamagnone L."/>
            <person name="Partanen J."/>
            <person name="Armstrong E."/>
            <person name="Lasota J."/>
            <person name="Ohgami K."/>
            <person name="Tazunoki T."/>
            <person name="Laforgia S."/>
            <person name="Huebner K."/>
            <person name="Alitalo K."/>
        </authorList>
    </citation>
    <scope>NUCLEOTIDE SEQUENCE [MRNA] (ISOFORMS 1 AND 2)</scope>
    <scope>VARIANT ASN-99</scope>
</reference>
<reference key="3">
    <citation type="journal article" date="2006" name="Nature">
        <title>The DNA sequence, annotation and analysis of human chromosome 3.</title>
        <authorList>
            <person name="Muzny D.M."/>
            <person name="Scherer S.E."/>
            <person name="Kaul R."/>
            <person name="Wang J."/>
            <person name="Yu J."/>
            <person name="Sudbrak R."/>
            <person name="Buhay C.J."/>
            <person name="Chen R."/>
            <person name="Cree A."/>
            <person name="Ding Y."/>
            <person name="Dugan-Rocha S."/>
            <person name="Gill R."/>
            <person name="Gunaratne P."/>
            <person name="Harris R.A."/>
            <person name="Hawes A.C."/>
            <person name="Hernandez J."/>
            <person name="Hodgson A.V."/>
            <person name="Hume J."/>
            <person name="Jackson A."/>
            <person name="Khan Z.M."/>
            <person name="Kovar-Smith C."/>
            <person name="Lewis L.R."/>
            <person name="Lozado R.J."/>
            <person name="Metzker M.L."/>
            <person name="Milosavljevic A."/>
            <person name="Miner G.R."/>
            <person name="Morgan M.B."/>
            <person name="Nazareth L.V."/>
            <person name="Scott G."/>
            <person name="Sodergren E."/>
            <person name="Song X.-Z."/>
            <person name="Steffen D."/>
            <person name="Wei S."/>
            <person name="Wheeler D.A."/>
            <person name="Wright M.W."/>
            <person name="Worley K.C."/>
            <person name="Yuan Y."/>
            <person name="Zhang Z."/>
            <person name="Adams C.Q."/>
            <person name="Ansari-Lari M.A."/>
            <person name="Ayele M."/>
            <person name="Brown M.J."/>
            <person name="Chen G."/>
            <person name="Chen Z."/>
            <person name="Clendenning J."/>
            <person name="Clerc-Blankenburg K.P."/>
            <person name="Chen R."/>
            <person name="Chen Z."/>
            <person name="Davis C."/>
            <person name="Delgado O."/>
            <person name="Dinh H.H."/>
            <person name="Dong W."/>
            <person name="Draper H."/>
            <person name="Ernst S."/>
            <person name="Fu G."/>
            <person name="Gonzalez-Garay M.L."/>
            <person name="Garcia D.K."/>
            <person name="Gillett W."/>
            <person name="Gu J."/>
            <person name="Hao B."/>
            <person name="Haugen E."/>
            <person name="Havlak P."/>
            <person name="He X."/>
            <person name="Hennig S."/>
            <person name="Hu S."/>
            <person name="Huang W."/>
            <person name="Jackson L.R."/>
            <person name="Jacob L.S."/>
            <person name="Kelly S.H."/>
            <person name="Kube M."/>
            <person name="Levy R."/>
            <person name="Li Z."/>
            <person name="Liu B."/>
            <person name="Liu J."/>
            <person name="Liu W."/>
            <person name="Lu J."/>
            <person name="Maheshwari M."/>
            <person name="Nguyen B.-V."/>
            <person name="Okwuonu G.O."/>
            <person name="Palmeiri A."/>
            <person name="Pasternak S."/>
            <person name="Perez L.M."/>
            <person name="Phelps K.A."/>
            <person name="Plopper F.J."/>
            <person name="Qiang B."/>
            <person name="Raymond C."/>
            <person name="Rodriguez R."/>
            <person name="Saenphimmachak C."/>
            <person name="Santibanez J."/>
            <person name="Shen H."/>
            <person name="Shen Y."/>
            <person name="Subramanian S."/>
            <person name="Tabor P.E."/>
            <person name="Verduzco D."/>
            <person name="Waldron L."/>
            <person name="Wang J."/>
            <person name="Wang J."/>
            <person name="Wang Q."/>
            <person name="Williams G.A."/>
            <person name="Wong G.K.-S."/>
            <person name="Yao Z."/>
            <person name="Zhang J."/>
            <person name="Zhang X."/>
            <person name="Zhao G."/>
            <person name="Zhou J."/>
            <person name="Zhou Y."/>
            <person name="Nelson D."/>
            <person name="Lehrach H."/>
            <person name="Reinhardt R."/>
            <person name="Naylor S.L."/>
            <person name="Yang H."/>
            <person name="Olson M."/>
            <person name="Weinstock G."/>
            <person name="Gibbs R.A."/>
        </authorList>
    </citation>
    <scope>NUCLEOTIDE SEQUENCE [LARGE SCALE GENOMIC DNA]</scope>
</reference>
<reference key="4">
    <citation type="journal article" date="1996" name="Mol. Med.">
        <title>H-RYK, an unusual receptor kinase: isolation and analysis of expression in ovarian cancer.</title>
        <authorList>
            <person name="Wang X.C."/>
            <person name="Katso R."/>
            <person name="Butler R."/>
            <person name="Hanby A.M."/>
            <person name="Poulsom R."/>
            <person name="Jones T."/>
            <person name="Sheer D."/>
            <person name="Ganesan T.S."/>
        </authorList>
    </citation>
    <scope>NUCLEOTIDE SEQUENCE [MRNA] OF 46-607 (ISOFORM 1)</scope>
    <scope>VARIANT ASN-99</scope>
    <source>
        <tissue>Ovary</tissue>
    </source>
</reference>
<reference key="5">
    <citation type="journal article" date="1999" name="Mol. Cell. Biol.">
        <title>Functional analysis of H-Ryk, an atypical member of the receptor tyrosine kinase family.</title>
        <authorList>
            <person name="Katso R.M."/>
            <person name="Russell R.B."/>
            <person name="Ganesan T.S."/>
        </authorList>
    </citation>
    <scope>MUTAGENESIS OF LYS-364; ASN-484 AND ALA-485</scope>
</reference>
<reference key="6">
    <citation type="journal article" date="2004" name="Cell">
        <title>Mammalian Ryk is a Wnt coreceptor required for stimulation of neurite outgrowth.</title>
        <authorList>
            <person name="Lu W."/>
            <person name="Yamamoto V."/>
            <person name="Ortega B."/>
            <person name="Baltimore D."/>
        </authorList>
    </citation>
    <scope>FUNCTION</scope>
    <scope>INTERACTION WITH DVL1</scope>
</reference>
<reference key="7">
    <citation type="journal article" date="2005" name="Nat. Neurosci.">
        <title>Ryk-mediated Wnt repulsion regulates posterior-directed growth of corticospinal tract.</title>
        <authorList>
            <person name="Liu Y."/>
            <person name="Shi J."/>
            <person name="Lu C.C."/>
            <person name="Wang Z.B."/>
            <person name="Lyuksyutova A.I."/>
            <person name="Song X.J."/>
            <person name="Zou Y."/>
        </authorList>
    </citation>
    <scope>CLEAVAGE BY PRESENILIN</scope>
</reference>
<reference key="8">
    <citation type="journal article" date="2007" name="Nature">
        <title>Patterns of somatic mutation in human cancer genomes.</title>
        <authorList>
            <person name="Greenman C."/>
            <person name="Stephens P."/>
            <person name="Smith R."/>
            <person name="Dalgliesh G.L."/>
            <person name="Hunter C."/>
            <person name="Bignell G."/>
            <person name="Davies H."/>
            <person name="Teague J."/>
            <person name="Butler A."/>
            <person name="Stevens C."/>
            <person name="Edkins S."/>
            <person name="O'Meara S."/>
            <person name="Vastrik I."/>
            <person name="Schmidt E.E."/>
            <person name="Avis T."/>
            <person name="Barthorpe S."/>
            <person name="Bhamra G."/>
            <person name="Buck G."/>
            <person name="Choudhury B."/>
            <person name="Clements J."/>
            <person name="Cole J."/>
            <person name="Dicks E."/>
            <person name="Forbes S."/>
            <person name="Gray K."/>
            <person name="Halliday K."/>
            <person name="Harrison R."/>
            <person name="Hills K."/>
            <person name="Hinton J."/>
            <person name="Jenkinson A."/>
            <person name="Jones D."/>
            <person name="Menzies A."/>
            <person name="Mironenko T."/>
            <person name="Perry J."/>
            <person name="Raine K."/>
            <person name="Richardson D."/>
            <person name="Shepherd R."/>
            <person name="Small A."/>
            <person name="Tofts C."/>
            <person name="Varian J."/>
            <person name="Webb T."/>
            <person name="West S."/>
            <person name="Widaa S."/>
            <person name="Yates A."/>
            <person name="Cahill D.P."/>
            <person name="Louis D.N."/>
            <person name="Goldstraw P."/>
            <person name="Nicholson A.G."/>
            <person name="Brasseur F."/>
            <person name="Looijenga L."/>
            <person name="Weber B.L."/>
            <person name="Chiew Y.-E."/>
            <person name="DeFazio A."/>
            <person name="Greaves M.F."/>
            <person name="Green A.R."/>
            <person name="Campbell P."/>
            <person name="Birney E."/>
            <person name="Easton D.F."/>
            <person name="Chenevix-Trench G."/>
            <person name="Tan M.-H."/>
            <person name="Khoo S.K."/>
            <person name="Teh B.T."/>
            <person name="Yuen S.T."/>
            <person name="Leung S.Y."/>
            <person name="Wooster R."/>
            <person name="Futreal P.A."/>
            <person name="Stratton M.R."/>
        </authorList>
    </citation>
    <scope>VARIANTS [LARGE SCALE ANALYSIS] ASN-99; CYS-227 AND ILE-243</scope>
</reference>
<name>RYK_HUMAN</name>
<dbReference type="EC" id="2.7.10.1" evidence="3"/>
<dbReference type="EMBL" id="S59184">
    <property type="protein sequence ID" value="AAB26341.1"/>
    <property type="status" value="ALT_FRAME"/>
    <property type="molecule type" value="mRNA"/>
</dbReference>
<dbReference type="EMBL" id="X69970">
    <property type="protein sequence ID" value="CAA49591.1"/>
    <property type="molecule type" value="mRNA"/>
</dbReference>
<dbReference type="EMBL" id="AC096967">
    <property type="status" value="NOT_ANNOTATED_CDS"/>
    <property type="molecule type" value="Genomic_DNA"/>
</dbReference>
<dbReference type="EMBL" id="AC107310">
    <property type="status" value="NOT_ANNOTATED_CDS"/>
    <property type="molecule type" value="Genomic_DNA"/>
</dbReference>
<dbReference type="EMBL" id="AC108742">
    <property type="status" value="NOT_ANNOTATED_CDS"/>
    <property type="molecule type" value="Genomic_DNA"/>
</dbReference>
<dbReference type="EMBL" id="AMYH02007719">
    <property type="status" value="NOT_ANNOTATED_CDS"/>
    <property type="molecule type" value="Genomic_DNA"/>
</dbReference>
<dbReference type="EMBL" id="X96588">
    <property type="protein sequence ID" value="CAA65406.1"/>
    <property type="status" value="ALT_INIT"/>
    <property type="molecule type" value="mRNA"/>
</dbReference>
<dbReference type="CCDS" id="CCDS75016.1">
    <molecule id="P34925-2"/>
</dbReference>
<dbReference type="CCDS" id="CCDS77820.1">
    <molecule id="P34925-1"/>
</dbReference>
<dbReference type="PIR" id="I37560">
    <property type="entry name" value="I37560"/>
</dbReference>
<dbReference type="RefSeq" id="NP_001005861.1">
    <molecule id="P34925-2"/>
    <property type="nucleotide sequence ID" value="NM_001005861.3"/>
</dbReference>
<dbReference type="RefSeq" id="NP_002949.2">
    <molecule id="P34925-1"/>
    <property type="nucleotide sequence ID" value="NM_002958.4"/>
</dbReference>
<dbReference type="PDB" id="6TUA">
    <property type="method" value="X-ray"/>
    <property type="resolution" value="2.38 A"/>
    <property type="chains" value="A=293-607"/>
</dbReference>
<dbReference type="PDBsum" id="6TUA"/>
<dbReference type="SMR" id="P34925"/>
<dbReference type="BioGRID" id="112171">
    <property type="interactions" value="214"/>
</dbReference>
<dbReference type="CORUM" id="P34925"/>
<dbReference type="FunCoup" id="P34925">
    <property type="interactions" value="1701"/>
</dbReference>
<dbReference type="IntAct" id="P34925">
    <property type="interactions" value="157"/>
</dbReference>
<dbReference type="MINT" id="P34925"/>
<dbReference type="STRING" id="9606.ENSP00000478721"/>
<dbReference type="GlyCosmos" id="P34925">
    <property type="glycosylation" value="5 sites, No reported glycans"/>
</dbReference>
<dbReference type="GlyGen" id="P34925">
    <property type="glycosylation" value="5 sites, 2 N-linked glycans (2 sites)"/>
</dbReference>
<dbReference type="iPTMnet" id="P34925"/>
<dbReference type="PhosphoSitePlus" id="P34925"/>
<dbReference type="BioMuta" id="RYK"/>
<dbReference type="DMDM" id="1710811"/>
<dbReference type="jPOST" id="P34925"/>
<dbReference type="MassIVE" id="P34925"/>
<dbReference type="PaxDb" id="9606-ENSP00000478721"/>
<dbReference type="PeptideAtlas" id="P34925"/>
<dbReference type="ProteomicsDB" id="54954">
    <molecule id="P34925-1"/>
</dbReference>
<dbReference type="ProteomicsDB" id="54955">
    <molecule id="P34925-2"/>
</dbReference>
<dbReference type="Antibodypedia" id="33387">
    <property type="antibodies" value="408 antibodies from 32 providers"/>
</dbReference>
<dbReference type="CPTC" id="P34925">
    <property type="antibodies" value="3 antibodies"/>
</dbReference>
<dbReference type="DNASU" id="6259"/>
<dbReference type="Ensembl" id="ENST00000620660.4">
    <molecule id="P34925-2"/>
    <property type="protein sequence ID" value="ENSP00000478721.1"/>
    <property type="gene ID" value="ENSG00000163785.14"/>
</dbReference>
<dbReference type="Ensembl" id="ENST00000623711.4">
    <molecule id="P34925-1"/>
    <property type="protein sequence ID" value="ENSP00000485095.1"/>
    <property type="gene ID" value="ENSG00000163785.14"/>
</dbReference>
<dbReference type="GeneID" id="6259"/>
<dbReference type="KEGG" id="hsa:6259"/>
<dbReference type="MANE-Select" id="ENST00000623711.4">
    <property type="protein sequence ID" value="ENSP00000485095.1"/>
    <property type="RefSeq nucleotide sequence ID" value="NM_002958.4"/>
    <property type="RefSeq protein sequence ID" value="NP_002949.2"/>
</dbReference>
<dbReference type="AGR" id="HGNC:10481"/>
<dbReference type="CTD" id="6259"/>
<dbReference type="DisGeNET" id="6259"/>
<dbReference type="GeneCards" id="RYK"/>
<dbReference type="HGNC" id="HGNC:10481">
    <property type="gene designation" value="RYK"/>
</dbReference>
<dbReference type="HPA" id="ENSG00000163785">
    <property type="expression patterns" value="Low tissue specificity"/>
</dbReference>
<dbReference type="MIM" id="600524">
    <property type="type" value="gene"/>
</dbReference>
<dbReference type="neXtProt" id="NX_P34925"/>
<dbReference type="OpenTargets" id="ENSG00000163785"/>
<dbReference type="PharmGKB" id="PA34894"/>
<dbReference type="VEuPathDB" id="HostDB:ENSG00000163785"/>
<dbReference type="eggNOG" id="KOG1024">
    <property type="taxonomic scope" value="Eukaryota"/>
</dbReference>
<dbReference type="GeneTree" id="ENSGT00940000155119"/>
<dbReference type="InParanoid" id="P34925"/>
<dbReference type="OMA" id="YCWAMSA"/>
<dbReference type="OrthoDB" id="4062651at2759"/>
<dbReference type="PAN-GO" id="P34925">
    <property type="GO annotations" value="6 GO annotations based on evolutionary models"/>
</dbReference>
<dbReference type="PhylomeDB" id="P34925"/>
<dbReference type="TreeFam" id="TF317402"/>
<dbReference type="BRENDA" id="2.7.10.1">
    <property type="organism ID" value="2681"/>
</dbReference>
<dbReference type="PathwayCommons" id="P34925"/>
<dbReference type="Reactome" id="R-HSA-201681">
    <property type="pathway name" value="TCF dependent signaling in response to WNT"/>
</dbReference>
<dbReference type="Reactome" id="R-HSA-4086400">
    <property type="pathway name" value="PCP/CE pathway"/>
</dbReference>
<dbReference type="SignaLink" id="P34925"/>
<dbReference type="SIGNOR" id="P34925"/>
<dbReference type="BioGRID-ORCS" id="6259">
    <property type="hits" value="15 hits in 343 CRISPR screens"/>
</dbReference>
<dbReference type="ChiTaRS" id="RYK">
    <property type="organism name" value="human"/>
</dbReference>
<dbReference type="GeneWiki" id="Related_to_receptor_tyrosine_kinase"/>
<dbReference type="GenomeRNAi" id="6259"/>
<dbReference type="Pharos" id="P34925">
    <property type="development level" value="Tbio"/>
</dbReference>
<dbReference type="PRO" id="PR:P34925"/>
<dbReference type="Proteomes" id="UP000005640">
    <property type="component" value="Chromosome 3"/>
</dbReference>
<dbReference type="RNAct" id="P34925">
    <property type="molecule type" value="protein"/>
</dbReference>
<dbReference type="Bgee" id="ENSG00000163785">
    <property type="expression patterns" value="Expressed in buccal mucosa cell and 215 other cell types or tissues"/>
</dbReference>
<dbReference type="ExpressionAtlas" id="P34925">
    <property type="expression patterns" value="baseline and differential"/>
</dbReference>
<dbReference type="GO" id="GO:0005737">
    <property type="term" value="C:cytoplasm"/>
    <property type="evidence" value="ECO:0000250"/>
    <property type="project" value="UniProtKB"/>
</dbReference>
<dbReference type="GO" id="GO:0098978">
    <property type="term" value="C:glutamatergic synapse"/>
    <property type="evidence" value="ECO:0007669"/>
    <property type="project" value="Ensembl"/>
</dbReference>
<dbReference type="GO" id="GO:0016020">
    <property type="term" value="C:membrane"/>
    <property type="evidence" value="ECO:0000250"/>
    <property type="project" value="UniProtKB"/>
</dbReference>
<dbReference type="GO" id="GO:0005634">
    <property type="term" value="C:nucleus"/>
    <property type="evidence" value="ECO:0000250"/>
    <property type="project" value="UniProtKB"/>
</dbReference>
<dbReference type="GO" id="GO:0005886">
    <property type="term" value="C:plasma membrane"/>
    <property type="evidence" value="ECO:0000250"/>
    <property type="project" value="ParkinsonsUK-UCL"/>
</dbReference>
<dbReference type="GO" id="GO:0098839">
    <property type="term" value="C:postsynaptic density membrane"/>
    <property type="evidence" value="ECO:0007669"/>
    <property type="project" value="Ensembl"/>
</dbReference>
<dbReference type="GO" id="GO:0048787">
    <property type="term" value="C:presynaptic active zone membrane"/>
    <property type="evidence" value="ECO:0007669"/>
    <property type="project" value="Ensembl"/>
</dbReference>
<dbReference type="GO" id="GO:0043235">
    <property type="term" value="C:receptor complex"/>
    <property type="evidence" value="ECO:0000318"/>
    <property type="project" value="GO_Central"/>
</dbReference>
<dbReference type="GO" id="GO:0005524">
    <property type="term" value="F:ATP binding"/>
    <property type="evidence" value="ECO:0007669"/>
    <property type="project" value="UniProtKB-KW"/>
</dbReference>
<dbReference type="GO" id="GO:0015026">
    <property type="term" value="F:coreceptor activity"/>
    <property type="evidence" value="ECO:0000304"/>
    <property type="project" value="ParkinsonsUK-UCL"/>
</dbReference>
<dbReference type="GO" id="GO:0005109">
    <property type="term" value="F:frizzled binding"/>
    <property type="evidence" value="ECO:0000250"/>
    <property type="project" value="ParkinsonsUK-UCL"/>
</dbReference>
<dbReference type="GO" id="GO:0004672">
    <property type="term" value="F:protein kinase activity"/>
    <property type="evidence" value="ECO:0007669"/>
    <property type="project" value="InterPro"/>
</dbReference>
<dbReference type="GO" id="GO:0004888">
    <property type="term" value="F:transmembrane signaling receptor activity"/>
    <property type="evidence" value="ECO:0000314"/>
    <property type="project" value="UniProtKB"/>
</dbReference>
<dbReference type="GO" id="GO:0042813">
    <property type="term" value="F:Wnt receptor activity"/>
    <property type="evidence" value="ECO:0000250"/>
    <property type="project" value="ParkinsonsUK-UCL"/>
</dbReference>
<dbReference type="GO" id="GO:0017147">
    <property type="term" value="F:Wnt-protein binding"/>
    <property type="evidence" value="ECO:0000250"/>
    <property type="project" value="ParkinsonsUK-UCL"/>
</dbReference>
<dbReference type="GO" id="GO:0048846">
    <property type="term" value="P:axon extension involved in axon guidance"/>
    <property type="evidence" value="ECO:0007669"/>
    <property type="project" value="Ensembl"/>
</dbReference>
<dbReference type="GO" id="GO:0007411">
    <property type="term" value="P:axon guidance"/>
    <property type="evidence" value="ECO:0000250"/>
    <property type="project" value="UniProtKB"/>
</dbReference>
<dbReference type="GO" id="GO:0007409">
    <property type="term" value="P:axonogenesis"/>
    <property type="evidence" value="ECO:0000250"/>
    <property type="project" value="ParkinsonsUK-UCL"/>
</dbReference>
<dbReference type="GO" id="GO:0060070">
    <property type="term" value="P:canonical Wnt signaling pathway"/>
    <property type="evidence" value="ECO:0000303"/>
    <property type="project" value="ParkinsonsUK-UCL"/>
</dbReference>
<dbReference type="GO" id="GO:0007169">
    <property type="term" value="P:cell surface receptor protein tyrosine kinase signaling pathway"/>
    <property type="evidence" value="ECO:0000318"/>
    <property type="project" value="GO_Central"/>
</dbReference>
<dbReference type="GO" id="GO:0036518">
    <property type="term" value="P:chemorepulsion of dopaminergic neuron axon"/>
    <property type="evidence" value="ECO:0000250"/>
    <property type="project" value="ParkinsonsUK-UCL"/>
</dbReference>
<dbReference type="GO" id="GO:0071679">
    <property type="term" value="P:commissural neuron axon guidance"/>
    <property type="evidence" value="ECO:0000250"/>
    <property type="project" value="ParkinsonsUK-UCL"/>
</dbReference>
<dbReference type="GO" id="GO:0022038">
    <property type="term" value="P:corpus callosum development"/>
    <property type="evidence" value="ECO:0000250"/>
    <property type="project" value="UniProtKB"/>
</dbReference>
<dbReference type="GO" id="GO:1904948">
    <property type="term" value="P:midbrain dopaminergic neuron differentiation"/>
    <property type="evidence" value="ECO:0000250"/>
    <property type="project" value="ParkinsonsUK-UCL"/>
</dbReference>
<dbReference type="GO" id="GO:0048843">
    <property type="term" value="P:negative regulation of axon extension involved in axon guidance"/>
    <property type="evidence" value="ECO:0007669"/>
    <property type="project" value="Ensembl"/>
</dbReference>
<dbReference type="GO" id="GO:0022008">
    <property type="term" value="P:neurogenesis"/>
    <property type="evidence" value="ECO:0000303"/>
    <property type="project" value="ParkinsonsUK-UCL"/>
</dbReference>
<dbReference type="GO" id="GO:0030182">
    <property type="term" value="P:neuron differentiation"/>
    <property type="evidence" value="ECO:0000250"/>
    <property type="project" value="UniProtKB"/>
</dbReference>
<dbReference type="GO" id="GO:0031175">
    <property type="term" value="P:neuron projection development"/>
    <property type="evidence" value="ECO:0000250"/>
    <property type="project" value="UniProtKB"/>
</dbReference>
<dbReference type="GO" id="GO:0035567">
    <property type="term" value="P:non-canonical Wnt signaling pathway"/>
    <property type="evidence" value="ECO:0000303"/>
    <property type="project" value="ParkinsonsUK-UCL"/>
</dbReference>
<dbReference type="GO" id="GO:1904935">
    <property type="term" value="P:positive regulation of cell proliferation in midbrain"/>
    <property type="evidence" value="ECO:0000250"/>
    <property type="project" value="ParkinsonsUK-UCL"/>
</dbReference>
<dbReference type="GO" id="GO:0043410">
    <property type="term" value="P:positive regulation of MAPK cascade"/>
    <property type="evidence" value="ECO:0000314"/>
    <property type="project" value="UniProtKB"/>
</dbReference>
<dbReference type="GO" id="GO:0010976">
    <property type="term" value="P:positive regulation of neuron projection development"/>
    <property type="evidence" value="ECO:0000318"/>
    <property type="project" value="GO_Central"/>
</dbReference>
<dbReference type="GO" id="GO:0051897">
    <property type="term" value="P:positive regulation of phosphatidylinositol 3-kinase/protein kinase B signal transduction"/>
    <property type="evidence" value="ECO:0000318"/>
    <property type="project" value="GO_Central"/>
</dbReference>
<dbReference type="GO" id="GO:0007165">
    <property type="term" value="P:signal transduction"/>
    <property type="evidence" value="ECO:0000304"/>
    <property type="project" value="ProtInc"/>
</dbReference>
<dbReference type="GO" id="GO:0048705">
    <property type="term" value="P:skeletal system morphogenesis"/>
    <property type="evidence" value="ECO:0007669"/>
    <property type="project" value="Ensembl"/>
</dbReference>
<dbReference type="GO" id="GO:0007416">
    <property type="term" value="P:synapse assembly"/>
    <property type="evidence" value="ECO:0000303"/>
    <property type="project" value="ParkinsonsUK-UCL"/>
</dbReference>
<dbReference type="GO" id="GO:0060071">
    <property type="term" value="P:Wnt signaling pathway, planar cell polarity pathway"/>
    <property type="evidence" value="ECO:0000304"/>
    <property type="project" value="ARUK-UCL"/>
</dbReference>
<dbReference type="CDD" id="cd05043">
    <property type="entry name" value="PTK_Ryk"/>
    <property type="match status" value="1"/>
</dbReference>
<dbReference type="FunFam" id="1.10.510.10:FF:000165">
    <property type="entry name" value="Tyrosine-protein kinase RYK"/>
    <property type="match status" value="1"/>
</dbReference>
<dbReference type="FunFam" id="2.60.40.2170:FF:000002">
    <property type="entry name" value="Tyrosine-protein kinase RYK"/>
    <property type="match status" value="1"/>
</dbReference>
<dbReference type="FunFam" id="3.30.200.20:FF:000218">
    <property type="entry name" value="Tyrosine-protein kinase RYK"/>
    <property type="match status" value="1"/>
</dbReference>
<dbReference type="Gene3D" id="3.30.200.20">
    <property type="entry name" value="Phosphorylase Kinase, domain 1"/>
    <property type="match status" value="1"/>
</dbReference>
<dbReference type="Gene3D" id="1.10.510.10">
    <property type="entry name" value="Transferase(Phosphotransferase) domain 1"/>
    <property type="match status" value="1"/>
</dbReference>
<dbReference type="Gene3D" id="2.60.40.2170">
    <property type="entry name" value="Wnt, WIF domain"/>
    <property type="match status" value="1"/>
</dbReference>
<dbReference type="InterPro" id="IPR011009">
    <property type="entry name" value="Kinase-like_dom_sf"/>
</dbReference>
<dbReference type="InterPro" id="IPR000719">
    <property type="entry name" value="Prot_kinase_dom"/>
</dbReference>
<dbReference type="InterPro" id="IPR050122">
    <property type="entry name" value="RTK"/>
</dbReference>
<dbReference type="InterPro" id="IPR001245">
    <property type="entry name" value="Ser-Thr/Tyr_kinase_cat_dom"/>
</dbReference>
<dbReference type="InterPro" id="IPR008266">
    <property type="entry name" value="Tyr_kinase_AS"/>
</dbReference>
<dbReference type="InterPro" id="IPR003306">
    <property type="entry name" value="WIF"/>
</dbReference>
<dbReference type="InterPro" id="IPR038677">
    <property type="entry name" value="WIF_sf"/>
</dbReference>
<dbReference type="PANTHER" id="PTHR24416">
    <property type="entry name" value="TYROSINE-PROTEIN KINASE RECEPTOR"/>
    <property type="match status" value="1"/>
</dbReference>
<dbReference type="PANTHER" id="PTHR24416:SF349">
    <property type="entry name" value="TYROSINE-PROTEIN KINASE RYK"/>
    <property type="match status" value="1"/>
</dbReference>
<dbReference type="Pfam" id="PF07714">
    <property type="entry name" value="PK_Tyr_Ser-Thr"/>
    <property type="match status" value="1"/>
</dbReference>
<dbReference type="Pfam" id="PF02019">
    <property type="entry name" value="WIF"/>
    <property type="match status" value="1"/>
</dbReference>
<dbReference type="PRINTS" id="PR00109">
    <property type="entry name" value="TYRKINASE"/>
</dbReference>
<dbReference type="SMART" id="SM00469">
    <property type="entry name" value="WIF"/>
    <property type="match status" value="1"/>
</dbReference>
<dbReference type="SUPFAM" id="SSF56112">
    <property type="entry name" value="Protein kinase-like (PK-like)"/>
    <property type="match status" value="1"/>
</dbReference>
<dbReference type="PROSITE" id="PS50011">
    <property type="entry name" value="PROTEIN_KINASE_DOM"/>
    <property type="match status" value="1"/>
</dbReference>
<dbReference type="PROSITE" id="PS00109">
    <property type="entry name" value="PROTEIN_KINASE_TYR"/>
    <property type="match status" value="1"/>
</dbReference>
<dbReference type="PROSITE" id="PS50814">
    <property type="entry name" value="WIF"/>
    <property type="match status" value="1"/>
</dbReference>
<feature type="signal peptide" evidence="2">
    <location>
        <begin position="1"/>
        <end position="25"/>
    </location>
</feature>
<feature type="chain" id="PRO_0000024464" description="Tyrosine-protein kinase RYK">
    <location>
        <begin position="26"/>
        <end position="607"/>
    </location>
</feature>
<feature type="topological domain" description="Extracellular" evidence="2">
    <location>
        <begin position="26"/>
        <end position="227"/>
    </location>
</feature>
<feature type="transmembrane region" description="Helical" evidence="2">
    <location>
        <begin position="228"/>
        <end position="248"/>
    </location>
</feature>
<feature type="topological domain" description="Cytoplasmic" evidence="2">
    <location>
        <begin position="249"/>
        <end position="607"/>
    </location>
</feature>
<feature type="domain" description="WIF" evidence="4">
    <location>
        <begin position="66"/>
        <end position="194"/>
    </location>
</feature>
<feature type="domain" description="Protein kinase" evidence="3">
    <location>
        <begin position="330"/>
        <end position="603"/>
    </location>
</feature>
<feature type="region of interest" description="Disordered" evidence="6">
    <location>
        <begin position="1"/>
        <end position="20"/>
    </location>
</feature>
<feature type="region of interest" description="Disordered" evidence="6">
    <location>
        <begin position="266"/>
        <end position="290"/>
    </location>
</feature>
<feature type="compositionally biased region" description="Low complexity" evidence="6">
    <location>
        <begin position="266"/>
        <end position="282"/>
    </location>
</feature>
<feature type="active site" description="Proton acceptor" evidence="3">
    <location>
        <position position="465"/>
    </location>
</feature>
<feature type="binding site" evidence="3">
    <location>
        <begin position="336"/>
        <end position="344"/>
    </location>
    <ligand>
        <name>ATP</name>
        <dbReference type="ChEBI" id="CHEBI:30616"/>
    </ligand>
</feature>
<feature type="binding site" evidence="3">
    <location>
        <position position="364"/>
    </location>
    <ligand>
        <name>ATP</name>
        <dbReference type="ChEBI" id="CHEBI:30616"/>
    </ligand>
</feature>
<feature type="modified residue" description="Phosphotyrosine; by autocatalysis" evidence="1">
    <location>
        <position position="495"/>
    </location>
</feature>
<feature type="glycosylation site" description="N-linked (GlcNAc...) asparagine" evidence="2">
    <location>
        <position position="139"/>
    </location>
</feature>
<feature type="glycosylation site" description="N-linked (GlcNAc...) asparagine" evidence="2">
    <location>
        <position position="174"/>
    </location>
</feature>
<feature type="glycosylation site" description="N-linked (GlcNAc...) asparagine" evidence="2">
    <location>
        <position position="178"/>
    </location>
</feature>
<feature type="glycosylation site" description="N-linked (GlcNAc...) asparagine" evidence="2">
    <location>
        <position position="182"/>
    </location>
</feature>
<feature type="glycosylation site" description="N-linked (GlcNAc...) asparagine" evidence="2">
    <location>
        <position position="209"/>
    </location>
</feature>
<feature type="disulfide bond" evidence="4">
    <location>
        <begin position="159"/>
        <end position="194"/>
    </location>
</feature>
<feature type="splice variant" id="VSP_005009" description="In isoform 2." evidence="14">
    <original>S</original>
    <variation>SSLG</variation>
    <location>
        <position position="297"/>
    </location>
</feature>
<feature type="sequence variant" id="VAR_041800" description="In dbSNP:rs1131262." evidence="10 11 12 13">
    <original>S</original>
    <variation>N</variation>
    <location>
        <position position="99"/>
    </location>
</feature>
<feature type="sequence variant" id="VAR_041801" description="In dbSNP:rs55740278." evidence="10">
    <original>R</original>
    <variation>C</variation>
    <location>
        <position position="227"/>
    </location>
</feature>
<feature type="sequence variant" id="VAR_041802" description="In an ovarian mucinous carcinoma sample; somatic mutation; dbSNP:rs746238409." evidence="10">
    <original>V</original>
    <variation>I</variation>
    <location>
        <position position="243"/>
    </location>
</feature>
<feature type="mutagenesis site" description="No induction of the MAPK pathway." evidence="7">
    <original>K</original>
    <variation>A</variation>
    <location>
        <position position="364"/>
    </location>
</feature>
<feature type="mutagenesis site" description="Gain of an autophosphorylation activity. Gain of an autophosphorylation activity; when associated with A-359. Gain of an autophosphorylation activity; when associated with G-334 and G-482." evidence="7">
    <original>N</original>
    <variation>F</variation>
    <location>
        <position position="484"/>
    </location>
</feature>
<feature type="mutagenesis site" description="Gain of an autophosphorylation activity. Gain of an autophosphorylation activity; when associated with G-334 and F-481." evidence="7">
    <original>A</original>
    <variation>G</variation>
    <location>
        <position position="485"/>
    </location>
</feature>
<feature type="sequence conflict" description="In Ref. 1; AAB26341." evidence="15" ref="1">
    <original>P</original>
    <variation>R</variation>
    <location>
        <position position="26"/>
    </location>
</feature>
<feature type="sequence conflict" description="In Ref. 1; AAB26341." evidence="15" ref="1">
    <original>L</original>
    <variation>V</variation>
    <location>
        <position position="33"/>
    </location>
</feature>
<feature type="sequence conflict" description="In Ref. 1; AAB26341 and 4; CAA65406." evidence="15" ref="1 4">
    <original>S</original>
    <variation>N</variation>
    <location>
        <position position="254"/>
    </location>
</feature>
<feature type="sequence conflict" description="In Ref. 2; CAA49591." evidence="15" ref="2">
    <original>K</original>
    <variation>E</variation>
    <location>
        <position position="319"/>
    </location>
</feature>
<feature type="sequence conflict" description="In Ref. 4; CAA65406." evidence="15" ref="4">
    <original>E</original>
    <variation>K</variation>
    <location>
        <position position="358"/>
    </location>
</feature>
<feature type="sequence conflict" description="In Ref. 2; CAA49591." evidence="15" ref="2">
    <original>Q</original>
    <variation>H</variation>
    <location>
        <position position="440"/>
    </location>
</feature>
<feature type="sequence conflict" description="In Ref. 2; CAA49591." evidence="15" ref="2">
    <original>A</original>
    <variation>P</variation>
    <location>
        <position position="446"/>
    </location>
</feature>
<feature type="sequence conflict" description="In Ref. 1; AAB26341." evidence="15" ref="1">
    <original>T</original>
    <variation>NS</variation>
    <location>
        <position position="531"/>
    </location>
</feature>
<feature type="sequence conflict" description="In Ref. 1; AAB26341." evidence="15" ref="1">
    <original>V</original>
    <variation>TL</variation>
    <location>
        <position position="544"/>
    </location>
</feature>
<feature type="sequence conflict" description="In Ref. 1; AAB26341." evidence="15" ref="1">
    <original>N</original>
    <variation>T</variation>
    <location>
        <position position="566"/>
    </location>
</feature>
<feature type="sequence conflict" description="In Ref. 1; AAB26341." evidence="15" ref="1">
    <original>K</original>
    <variation>R</variation>
    <location>
        <position position="588"/>
    </location>
</feature>
<feature type="helix" evidence="18">
    <location>
        <begin position="313"/>
        <end position="319"/>
    </location>
</feature>
<feature type="helix" evidence="18">
    <location>
        <begin position="320"/>
        <end position="323"/>
    </location>
</feature>
<feature type="helix" evidence="18">
    <location>
        <begin position="327"/>
        <end position="329"/>
    </location>
</feature>
<feature type="strand" evidence="18">
    <location>
        <begin position="330"/>
        <end position="338"/>
    </location>
</feature>
<feature type="strand" evidence="18">
    <location>
        <begin position="340"/>
        <end position="349"/>
    </location>
</feature>
<feature type="strand" evidence="18">
    <location>
        <begin position="359"/>
        <end position="366"/>
    </location>
</feature>
<feature type="helix" evidence="18">
    <location>
        <begin position="372"/>
        <end position="382"/>
    </location>
</feature>
<feature type="turn" evidence="18">
    <location>
        <begin position="383"/>
        <end position="387"/>
    </location>
</feature>
<feature type="strand" evidence="18">
    <location>
        <begin position="398"/>
        <end position="400"/>
    </location>
</feature>
<feature type="strand" evidence="18">
    <location>
        <begin position="408"/>
        <end position="412"/>
    </location>
</feature>
<feature type="helix" evidence="18">
    <location>
        <begin position="419"/>
        <end position="432"/>
    </location>
</feature>
<feature type="helix" evidence="18">
    <location>
        <begin position="434"/>
        <end position="436"/>
    </location>
</feature>
<feature type="helix" evidence="18">
    <location>
        <begin position="439"/>
        <end position="458"/>
    </location>
</feature>
<feature type="helix" evidence="18">
    <location>
        <begin position="468"/>
        <end position="470"/>
    </location>
</feature>
<feature type="strand" evidence="18">
    <location>
        <begin position="471"/>
        <end position="473"/>
    </location>
</feature>
<feature type="strand" evidence="18">
    <location>
        <begin position="479"/>
        <end position="481"/>
    </location>
</feature>
<feature type="helix" evidence="18">
    <location>
        <begin position="487"/>
        <end position="490"/>
    </location>
</feature>
<feature type="helix" evidence="18">
    <location>
        <begin position="492"/>
        <end position="494"/>
    </location>
</feature>
<feature type="helix" evidence="18">
    <location>
        <begin position="506"/>
        <end position="508"/>
    </location>
</feature>
<feature type="helix" evidence="18">
    <location>
        <begin position="511"/>
        <end position="516"/>
    </location>
</feature>
<feature type="helix" evidence="18">
    <location>
        <begin position="521"/>
        <end position="536"/>
    </location>
</feature>
<feature type="turn" evidence="18">
    <location>
        <begin position="542"/>
        <end position="545"/>
    </location>
</feature>
<feature type="helix" evidence="18">
    <location>
        <begin position="548"/>
        <end position="550"/>
    </location>
</feature>
<feature type="helix" evidence="18">
    <location>
        <begin position="551"/>
        <end position="556"/>
    </location>
</feature>
<feature type="helix" evidence="18">
    <location>
        <begin position="569"/>
        <end position="578"/>
    </location>
</feature>
<feature type="helix" evidence="18">
    <location>
        <begin position="583"/>
        <end position="585"/>
    </location>
</feature>
<feature type="helix" evidence="18">
    <location>
        <begin position="589"/>
        <end position="605"/>
    </location>
</feature>